<proteinExistence type="inferred from homology"/>
<feature type="chain" id="PRO_0000281403" description="TelA-like protein SAOUHSC_01408">
    <location>
        <begin position="1"/>
        <end position="378"/>
    </location>
</feature>
<gene>
    <name type="ordered locus">SAOUHSC_01408</name>
</gene>
<sequence length="378" mass="43407">MTENKSFKESHPLDDFISDKELSNTTIQKEKLTIEQQKQVDTISKQINPLDNEGLLAFGSDLQKQMSQFSHQMLDEVQSKDVGPIGDTLSDLMSKLKSVNPNELNTDKPSMLKRIFSRAKSSINEIFSRMQSVSAQVDRITIQLQKHQTHLTRDIELLDTLYDKNKQYFDDLSLHIIAAQQKKLQLENEKLPQLQQQAQQSTNQMDIQQVADMQQFIDRLDKRIYDLQLSRQIALQTAPQIRMIQNVNQALAEKIQSSILTSIPLWKNQMAIALTLMRQRNAVAAQRAVTDTTNDLLTANAEMLKQNAIETATENERGIVDLDTLKRTQRNIIETIEETLIIQQHGREERQLAEKELQQLEQDLKSHLVNIKGPNKQS</sequence>
<name>TELL_STAA8</name>
<evidence type="ECO:0000305" key="1"/>
<organism>
    <name type="scientific">Staphylococcus aureus (strain NCTC 8325 / PS 47)</name>
    <dbReference type="NCBI Taxonomy" id="93061"/>
    <lineage>
        <taxon>Bacteria</taxon>
        <taxon>Bacillati</taxon>
        <taxon>Bacillota</taxon>
        <taxon>Bacilli</taxon>
        <taxon>Bacillales</taxon>
        <taxon>Staphylococcaceae</taxon>
        <taxon>Staphylococcus</taxon>
    </lineage>
</organism>
<dbReference type="EMBL" id="CP000253">
    <property type="protein sequence ID" value="ABD30502.1"/>
    <property type="molecule type" value="Genomic_DNA"/>
</dbReference>
<dbReference type="RefSeq" id="WP_000138413.1">
    <property type="nucleotide sequence ID" value="NZ_LS483365.1"/>
</dbReference>
<dbReference type="RefSeq" id="YP_499935.1">
    <property type="nucleotide sequence ID" value="NC_007795.1"/>
</dbReference>
<dbReference type="SMR" id="Q2FYM7"/>
<dbReference type="STRING" id="93061.SAOUHSC_01408"/>
<dbReference type="PaxDb" id="1280-SAXN108_1423"/>
<dbReference type="GeneID" id="3920640"/>
<dbReference type="KEGG" id="sao:SAOUHSC_01408"/>
<dbReference type="PATRIC" id="fig|93061.5.peg.1288"/>
<dbReference type="eggNOG" id="COG3853">
    <property type="taxonomic scope" value="Bacteria"/>
</dbReference>
<dbReference type="HOGENOM" id="CLU_032111_0_0_9"/>
<dbReference type="OrthoDB" id="9768858at2"/>
<dbReference type="PRO" id="PR:Q2FYM7"/>
<dbReference type="Proteomes" id="UP000008816">
    <property type="component" value="Chromosome"/>
</dbReference>
<dbReference type="InterPro" id="IPR008863">
    <property type="entry name" value="Toxic_anion-R_TelA"/>
</dbReference>
<dbReference type="PANTHER" id="PTHR38432">
    <property type="entry name" value="TELA-LIKE PROTEIN SAOUHSC_01408"/>
    <property type="match status" value="1"/>
</dbReference>
<dbReference type="PANTHER" id="PTHR38432:SF1">
    <property type="entry name" value="TELA-LIKE PROTEIN SAOUHSC_01408"/>
    <property type="match status" value="1"/>
</dbReference>
<dbReference type="Pfam" id="PF05816">
    <property type="entry name" value="TelA"/>
    <property type="match status" value="1"/>
</dbReference>
<dbReference type="PIRSF" id="PIRSF026508">
    <property type="entry name" value="TelA"/>
    <property type="match status" value="1"/>
</dbReference>
<keyword id="KW-1185">Reference proteome</keyword>
<reference key="1">
    <citation type="book" date="2006" name="Gram positive pathogens, 2nd edition">
        <title>The Staphylococcus aureus NCTC 8325 genome.</title>
        <editorList>
            <person name="Fischetti V."/>
            <person name="Novick R."/>
            <person name="Ferretti J."/>
            <person name="Portnoy D."/>
            <person name="Rood J."/>
        </editorList>
        <authorList>
            <person name="Gillaspy A.F."/>
            <person name="Worrell V."/>
            <person name="Orvis J."/>
            <person name="Roe B.A."/>
            <person name="Dyer D.W."/>
            <person name="Iandolo J.J."/>
        </authorList>
    </citation>
    <scope>NUCLEOTIDE SEQUENCE [LARGE SCALE GENOMIC DNA]</scope>
    <source>
        <strain>NCTC 8325 / PS 47</strain>
    </source>
</reference>
<reference key="2">
    <citation type="journal article" date="2006" name="J. Bacteriol.">
        <title>Investigations into sigmaB-modulated regulatory pathways governing extracellular virulence determinant production in Staphylococcus aureus.</title>
        <authorList>
            <person name="Shaw L.N."/>
            <person name="Aish J."/>
            <person name="Davenport J.E."/>
            <person name="Brown M.C."/>
            <person name="Lithgow J.K."/>
            <person name="Simmonite K."/>
            <person name="Crossley H."/>
            <person name="Travis J."/>
            <person name="Potempa J."/>
            <person name="Foster S.J."/>
        </authorList>
    </citation>
    <scope>MUTANT STUDIES</scope>
</reference>
<accession>Q2FYM7</accession>
<comment type="miscellaneous">
    <text>Disruption of this gene leads to an increase in hla (alpha-hemolysin) transcription and proteases production.</text>
</comment>
<comment type="similarity">
    <text evidence="1">Belongs to the TelA family.</text>
</comment>
<protein>
    <recommendedName>
        <fullName>TelA-like protein SAOUHSC_01408</fullName>
    </recommendedName>
</protein>